<sequence length="691" mass="77852">MSGASNTSQSGSKKKLSFIIRDEQEPLHRSAVSALQYDALHSRLFTGGSDTIIRTWSVPQHKDAFSARGGVRSAGKNSPVQYQSSLERHTDWVTDMVLCGNGKLLVSSSNDTTVKVWSIERDNKHGYLDSLNLHTDYVSCLAYAPLAEKVVSASFDRNIFVYDVNSNFNNFRVLVNNLLGCKNSIYSLATTPNLSHCLFFSPHQQIRMFDPRTNDKPMKMRGHSDNVRALLLNDDGTRALSAGSDGTIRLWDIGMQKNIATGIAHEEGVWTIQVDASFKFVYSGGRDRYVLKSPVNDLSKFQVLFKEEAPVKKLLLSEKENPSSIWVGTWKSDIKRWSLNSANQNSNGGDEEGVSSFSTYYTTCKPRSSSPPPGITAPKHIQRLTDARELQNTPELMISGAPAINKYKILNDKRHVLTSDTEDNVALYDVLAGKKVKEYGKRALENVFEEKSKTVYVPSWFIVDSKSGMLQITLDELDVFSSWLTTKDAGFDDSDKETKVNYGGMMLRSLFERWPPCKLATAEAGESDEVQKATSHYYTLPEHTPFIVCEGNGRPLFRLLVGDAGNEFESGELAQCVPPWVTDMIERNVLPKFNKMPFYLLPHPSTNSKQPKKDRLSATEMLLVKKVMEHVYEKVLGNVDANTVPLNQIHTKIEMYCNDQKLEPETDLRTVKHFYWKQSGELLLYYRPVKN</sequence>
<keyword id="KW-1185">Reference proteome</keyword>
<keyword id="KW-0677">Repeat</keyword>
<keyword id="KW-0833">Ubl conjugation pathway</keyword>
<keyword id="KW-0853">WD repeat</keyword>
<dbReference type="EMBL" id="HE600963">
    <property type="protein sequence ID" value="CAP35565.2"/>
    <property type="status" value="ALT_SEQ"/>
    <property type="molecule type" value="Genomic_DNA"/>
</dbReference>
<dbReference type="SMR" id="A8XSW2"/>
<dbReference type="FunCoup" id="A8XSW2">
    <property type="interactions" value="3548"/>
</dbReference>
<dbReference type="STRING" id="6238.A8XSW2"/>
<dbReference type="WormBase" id="CBG18038a">
    <property type="protein sequence ID" value="CBP37976"/>
    <property type="gene ID" value="WBGene00037535"/>
    <property type="gene designation" value="Cbr-wdr-48"/>
</dbReference>
<dbReference type="eggNOG" id="KOG0308">
    <property type="taxonomic scope" value="Eukaryota"/>
</dbReference>
<dbReference type="HOGENOM" id="CLU_014960_0_1_1"/>
<dbReference type="InParanoid" id="A8XSW2"/>
<dbReference type="Proteomes" id="UP000008549">
    <property type="component" value="Unassembled WGS sequence"/>
</dbReference>
<dbReference type="GO" id="GO:0043130">
    <property type="term" value="F:ubiquitin binding"/>
    <property type="evidence" value="ECO:0000318"/>
    <property type="project" value="GO_Central"/>
</dbReference>
<dbReference type="GO" id="GO:0000724">
    <property type="term" value="P:double-strand break repair via homologous recombination"/>
    <property type="evidence" value="ECO:0000318"/>
    <property type="project" value="GO_Central"/>
</dbReference>
<dbReference type="CDD" id="cd17041">
    <property type="entry name" value="Ubl_WDR48"/>
    <property type="match status" value="1"/>
</dbReference>
<dbReference type="CDD" id="cd00200">
    <property type="entry name" value="WD40"/>
    <property type="match status" value="1"/>
</dbReference>
<dbReference type="FunFam" id="2.130.10.10:FF:002191">
    <property type="entry name" value="WD repeat-containing protein 48 homolog"/>
    <property type="match status" value="1"/>
</dbReference>
<dbReference type="Gene3D" id="2.130.10.10">
    <property type="entry name" value="YVTN repeat-like/Quinoprotein amine dehydrogenase"/>
    <property type="match status" value="2"/>
</dbReference>
<dbReference type="InterPro" id="IPR020472">
    <property type="entry name" value="G-protein_beta_WD-40_rep"/>
</dbReference>
<dbReference type="InterPro" id="IPR015943">
    <property type="entry name" value="WD40/YVTN_repeat-like_dom_sf"/>
</dbReference>
<dbReference type="InterPro" id="IPR019775">
    <property type="entry name" value="WD40_repeat_CS"/>
</dbReference>
<dbReference type="InterPro" id="IPR036322">
    <property type="entry name" value="WD40_repeat_dom_sf"/>
</dbReference>
<dbReference type="InterPro" id="IPR001680">
    <property type="entry name" value="WD40_rpt"/>
</dbReference>
<dbReference type="InterPro" id="IPR051246">
    <property type="entry name" value="WDR48"/>
</dbReference>
<dbReference type="InterPro" id="IPR021772">
    <property type="entry name" value="WDR48/Bun107"/>
</dbReference>
<dbReference type="PANTHER" id="PTHR19862">
    <property type="entry name" value="WD REPEAT-CONTAINING PROTEIN 48"/>
    <property type="match status" value="1"/>
</dbReference>
<dbReference type="PANTHER" id="PTHR19862:SF14">
    <property type="entry name" value="WD REPEAT-CONTAINING PROTEIN 48"/>
    <property type="match status" value="1"/>
</dbReference>
<dbReference type="Pfam" id="PF11816">
    <property type="entry name" value="DUF3337"/>
    <property type="match status" value="1"/>
</dbReference>
<dbReference type="Pfam" id="PF00400">
    <property type="entry name" value="WD40"/>
    <property type="match status" value="3"/>
</dbReference>
<dbReference type="PRINTS" id="PR00320">
    <property type="entry name" value="GPROTEINBRPT"/>
</dbReference>
<dbReference type="SMART" id="SM00320">
    <property type="entry name" value="WD40"/>
    <property type="match status" value="6"/>
</dbReference>
<dbReference type="SUPFAM" id="SSF50978">
    <property type="entry name" value="WD40 repeat-like"/>
    <property type="match status" value="1"/>
</dbReference>
<dbReference type="PROSITE" id="PS00678">
    <property type="entry name" value="WD_REPEATS_1"/>
    <property type="match status" value="1"/>
</dbReference>
<dbReference type="PROSITE" id="PS50082">
    <property type="entry name" value="WD_REPEATS_2"/>
    <property type="match status" value="4"/>
</dbReference>
<dbReference type="PROSITE" id="PS50294">
    <property type="entry name" value="WD_REPEATS_REGION"/>
    <property type="match status" value="1"/>
</dbReference>
<name>WDR48_CAEBR</name>
<reference key="1">
    <citation type="journal article" date="2003" name="PLoS Biol.">
        <title>The genome sequence of Caenorhabditis briggsae: a platform for comparative genomics.</title>
        <authorList>
            <person name="Stein L.D."/>
            <person name="Bao Z."/>
            <person name="Blasiar D."/>
            <person name="Blumenthal T."/>
            <person name="Brent M.R."/>
            <person name="Chen N."/>
            <person name="Chinwalla A."/>
            <person name="Clarke L."/>
            <person name="Clee C."/>
            <person name="Coghlan A."/>
            <person name="Coulson A."/>
            <person name="D'Eustachio P."/>
            <person name="Fitch D.H.A."/>
            <person name="Fulton L.A."/>
            <person name="Fulton R.E."/>
            <person name="Griffiths-Jones S."/>
            <person name="Harris T.W."/>
            <person name="Hillier L.W."/>
            <person name="Kamath R."/>
            <person name="Kuwabara P.E."/>
            <person name="Mardis E.R."/>
            <person name="Marra M.A."/>
            <person name="Miner T.L."/>
            <person name="Minx P."/>
            <person name="Mullikin J.C."/>
            <person name="Plumb R.W."/>
            <person name="Rogers J."/>
            <person name="Schein J.E."/>
            <person name="Sohrmann M."/>
            <person name="Spieth J."/>
            <person name="Stajich J.E."/>
            <person name="Wei C."/>
            <person name="Willey D."/>
            <person name="Wilson R.K."/>
            <person name="Durbin R.M."/>
            <person name="Waterston R.H."/>
        </authorList>
    </citation>
    <scope>NUCLEOTIDE SEQUENCE [LARGE SCALE GENOMIC DNA]</scope>
    <source>
        <strain>AF16</strain>
    </source>
</reference>
<evidence type="ECO:0000250" key="1"/>
<evidence type="ECO:0000305" key="2"/>
<organism>
    <name type="scientific">Caenorhabditis briggsae</name>
    <dbReference type="NCBI Taxonomy" id="6238"/>
    <lineage>
        <taxon>Eukaryota</taxon>
        <taxon>Metazoa</taxon>
        <taxon>Ecdysozoa</taxon>
        <taxon>Nematoda</taxon>
        <taxon>Chromadorea</taxon>
        <taxon>Rhabditida</taxon>
        <taxon>Rhabditina</taxon>
        <taxon>Rhabditomorpha</taxon>
        <taxon>Rhabditoidea</taxon>
        <taxon>Rhabditidae</taxon>
        <taxon>Peloderinae</taxon>
        <taxon>Caenorhabditis</taxon>
    </lineage>
</organism>
<comment type="function">
    <text evidence="1">Together with wdr-20, binds to and stimulates the activity of the deubiquitinating enzyme usp-46, leading to deubiquitination and stabilization of the glr-1 glutamate receptor.</text>
</comment>
<comment type="subunit">
    <text evidence="1">Interacts with usp-46; the interaction increases the catalytic activity of usp-46 in the presence of wdr-20.</text>
</comment>
<comment type="similarity">
    <text evidence="2">Belongs to the WD repeat WDR48 family.</text>
</comment>
<comment type="sequence caution" evidence="2">
    <conflict type="erroneous gene model prediction">
        <sequence resource="EMBL-CDS" id="CAP35565"/>
    </conflict>
</comment>
<proteinExistence type="inferred from homology"/>
<protein>
    <recommendedName>
        <fullName>WD repeat-containing protein 48 homolog</fullName>
    </recommendedName>
</protein>
<accession>A8XSW2</accession>
<feature type="chain" id="PRO_0000378974" description="WD repeat-containing protein 48 homolog">
    <location>
        <begin position="1"/>
        <end position="691"/>
    </location>
</feature>
<feature type="repeat" description="WD 1">
    <location>
        <begin position="27"/>
        <end position="82"/>
    </location>
</feature>
<feature type="repeat" description="WD 2">
    <location>
        <begin position="88"/>
        <end position="130"/>
    </location>
</feature>
<feature type="repeat" description="WD 3">
    <location>
        <begin position="133"/>
        <end position="168"/>
    </location>
</feature>
<feature type="repeat" description="WD 4">
    <location>
        <begin position="180"/>
        <end position="219"/>
    </location>
</feature>
<feature type="repeat" description="WD 5">
    <location>
        <begin position="222"/>
        <end position="261"/>
    </location>
</feature>
<feature type="repeat" description="WD 6">
    <location>
        <begin position="264"/>
        <end position="303"/>
    </location>
</feature>
<feature type="repeat" description="WD 7">
    <location>
        <begin position="306"/>
        <end position="347"/>
    </location>
</feature>
<feature type="repeat" description="WD 8">
    <location>
        <begin position="399"/>
        <end position="438"/>
    </location>
</feature>
<gene>
    <name type="primary">wdr-48</name>
    <name type="ORF">CBG18038</name>
</gene>